<dbReference type="EC" id="2.3.1.181" evidence="1"/>
<dbReference type="EMBL" id="AE008918">
    <property type="protein sequence ID" value="AAL53920.1"/>
    <property type="molecule type" value="Genomic_DNA"/>
</dbReference>
<dbReference type="PIR" id="AE3594">
    <property type="entry name" value="AE3594"/>
</dbReference>
<dbReference type="SMR" id="Q8YC54"/>
<dbReference type="KEGG" id="bme:BMEII0678"/>
<dbReference type="eggNOG" id="COG0321">
    <property type="taxonomic scope" value="Bacteria"/>
</dbReference>
<dbReference type="PhylomeDB" id="Q8YC54"/>
<dbReference type="UniPathway" id="UPA00538">
    <property type="reaction ID" value="UER00592"/>
</dbReference>
<dbReference type="Proteomes" id="UP000000419">
    <property type="component" value="Chromosome II"/>
</dbReference>
<dbReference type="GO" id="GO:0005737">
    <property type="term" value="C:cytoplasm"/>
    <property type="evidence" value="ECO:0007669"/>
    <property type="project" value="UniProtKB-SubCell"/>
</dbReference>
<dbReference type="GO" id="GO:0033819">
    <property type="term" value="F:lipoyl(octanoyl) transferase activity"/>
    <property type="evidence" value="ECO:0007669"/>
    <property type="project" value="UniProtKB-EC"/>
</dbReference>
<dbReference type="GO" id="GO:0036211">
    <property type="term" value="P:protein modification process"/>
    <property type="evidence" value="ECO:0007669"/>
    <property type="project" value="InterPro"/>
</dbReference>
<dbReference type="CDD" id="cd16444">
    <property type="entry name" value="LipB"/>
    <property type="match status" value="1"/>
</dbReference>
<dbReference type="FunFam" id="3.30.930.10:FF:000159">
    <property type="entry name" value="Octanoyltransferase"/>
    <property type="match status" value="1"/>
</dbReference>
<dbReference type="Gene3D" id="3.30.930.10">
    <property type="entry name" value="Bira Bifunctional Protein, Domain 2"/>
    <property type="match status" value="1"/>
</dbReference>
<dbReference type="HAMAP" id="MF_00013">
    <property type="entry name" value="LipB"/>
    <property type="match status" value="1"/>
</dbReference>
<dbReference type="InterPro" id="IPR045864">
    <property type="entry name" value="aa-tRNA-synth_II/BPL/LPL"/>
</dbReference>
<dbReference type="InterPro" id="IPR004143">
    <property type="entry name" value="BPL_LPL_catalytic"/>
</dbReference>
<dbReference type="InterPro" id="IPR000544">
    <property type="entry name" value="Octanoyltransferase"/>
</dbReference>
<dbReference type="InterPro" id="IPR020605">
    <property type="entry name" value="Octanoyltransferase_CS"/>
</dbReference>
<dbReference type="NCBIfam" id="TIGR00214">
    <property type="entry name" value="lipB"/>
    <property type="match status" value="1"/>
</dbReference>
<dbReference type="NCBIfam" id="NF010921">
    <property type="entry name" value="PRK14341.1"/>
    <property type="match status" value="1"/>
</dbReference>
<dbReference type="NCBIfam" id="NF010925">
    <property type="entry name" value="PRK14345.1"/>
    <property type="match status" value="1"/>
</dbReference>
<dbReference type="PANTHER" id="PTHR10993:SF7">
    <property type="entry name" value="LIPOYLTRANSFERASE 2, MITOCHONDRIAL-RELATED"/>
    <property type="match status" value="1"/>
</dbReference>
<dbReference type="PANTHER" id="PTHR10993">
    <property type="entry name" value="OCTANOYLTRANSFERASE"/>
    <property type="match status" value="1"/>
</dbReference>
<dbReference type="Pfam" id="PF21948">
    <property type="entry name" value="LplA-B_cat"/>
    <property type="match status" value="1"/>
</dbReference>
<dbReference type="SUPFAM" id="SSF55681">
    <property type="entry name" value="Class II aaRS and biotin synthetases"/>
    <property type="match status" value="1"/>
</dbReference>
<dbReference type="PROSITE" id="PS51733">
    <property type="entry name" value="BPL_LPL_CATALYTIC"/>
    <property type="match status" value="1"/>
</dbReference>
<dbReference type="PROSITE" id="PS01313">
    <property type="entry name" value="LIPB"/>
    <property type="match status" value="1"/>
</dbReference>
<keyword id="KW-0012">Acyltransferase</keyword>
<keyword id="KW-0963">Cytoplasm</keyword>
<keyword id="KW-0808">Transferase</keyword>
<reference key="1">
    <citation type="journal article" date="2002" name="Proc. Natl. Acad. Sci. U.S.A.">
        <title>The genome sequence of the facultative intracellular pathogen Brucella melitensis.</title>
        <authorList>
            <person name="DelVecchio V.G."/>
            <person name="Kapatral V."/>
            <person name="Redkar R.J."/>
            <person name="Patra G."/>
            <person name="Mujer C."/>
            <person name="Los T."/>
            <person name="Ivanova N."/>
            <person name="Anderson I."/>
            <person name="Bhattacharyya A."/>
            <person name="Lykidis A."/>
            <person name="Reznik G."/>
            <person name="Jablonski L."/>
            <person name="Larsen N."/>
            <person name="D'Souza M."/>
            <person name="Bernal A."/>
            <person name="Mazur M."/>
            <person name="Goltsman E."/>
            <person name="Selkov E."/>
            <person name="Elzer P.H."/>
            <person name="Hagius S."/>
            <person name="O'Callaghan D."/>
            <person name="Letesson J.-J."/>
            <person name="Haselkorn R."/>
            <person name="Kyrpides N.C."/>
            <person name="Overbeek R."/>
        </authorList>
    </citation>
    <scope>NUCLEOTIDE SEQUENCE [LARGE SCALE GENOMIC DNA]</scope>
    <source>
        <strain>ATCC 23456 / CCUG 17765 / NCTC 10094 / 16M</strain>
    </source>
</reference>
<protein>
    <recommendedName>
        <fullName evidence="1">Octanoyltransferase</fullName>
        <ecNumber evidence="1">2.3.1.181</ecNumber>
    </recommendedName>
    <alternativeName>
        <fullName evidence="1">Lipoate-protein ligase B</fullName>
    </alternativeName>
    <alternativeName>
        <fullName evidence="1">Lipoyl/octanoyl transferase</fullName>
    </alternativeName>
    <alternativeName>
        <fullName evidence="1">Octanoyl-[acyl-carrier-protein]-protein N-octanoyltransferase</fullName>
    </alternativeName>
</protein>
<proteinExistence type="inferred from homology"/>
<accession>Q8YC54</accession>
<sequence length="264" mass="29301">MPTGKLRQKPPYAAIMTNSPVTPSTETQQPKRYARFLPQEADAPPVEWLIAEGLTDYEEALAFMEARVQAIREGTASELVWLVEHPPLYTAGTSANAEDLLTPDRFPVFNTGRGGEYTYHGPGQRVAYVMLDLKRRREDVRAFVASLEQWIIETLAAFNIKGERREDRVGVWVVRPEKPRLADGSMCEDKIAAIGIRLRRWVSFHGIAINVEPDLSHYGGIVPCGISEHGVTSLVDLGLPVTMGDVDVALGKAFESVFGPRQTK</sequence>
<name>LIPB_BRUME</name>
<comment type="function">
    <text evidence="1">Catalyzes the transfer of endogenously produced octanoic acid from octanoyl-acyl-carrier-protein onto the lipoyl domains of lipoate-dependent enzymes. Lipoyl-ACP can also act as a substrate although octanoyl-ACP is likely to be the physiological substrate.</text>
</comment>
<comment type="catalytic activity">
    <reaction evidence="1">
        <text>octanoyl-[ACP] + L-lysyl-[protein] = N(6)-octanoyl-L-lysyl-[protein] + holo-[ACP] + H(+)</text>
        <dbReference type="Rhea" id="RHEA:17665"/>
        <dbReference type="Rhea" id="RHEA-COMP:9636"/>
        <dbReference type="Rhea" id="RHEA-COMP:9685"/>
        <dbReference type="Rhea" id="RHEA-COMP:9752"/>
        <dbReference type="Rhea" id="RHEA-COMP:9928"/>
        <dbReference type="ChEBI" id="CHEBI:15378"/>
        <dbReference type="ChEBI" id="CHEBI:29969"/>
        <dbReference type="ChEBI" id="CHEBI:64479"/>
        <dbReference type="ChEBI" id="CHEBI:78463"/>
        <dbReference type="ChEBI" id="CHEBI:78809"/>
        <dbReference type="EC" id="2.3.1.181"/>
    </reaction>
</comment>
<comment type="pathway">
    <text evidence="1">Protein modification; protein lipoylation via endogenous pathway; protein N(6)-(lipoyl)lysine from octanoyl-[acyl-carrier-protein]: step 1/2.</text>
</comment>
<comment type="subcellular location">
    <subcellularLocation>
        <location evidence="1">Cytoplasm</location>
    </subcellularLocation>
</comment>
<comment type="miscellaneous">
    <text evidence="1">In the reaction, the free carboxyl group of octanoic acid is attached via an amide linkage to the epsilon-amino group of a specific lysine residue of lipoyl domains of lipoate-dependent enzymes.</text>
</comment>
<comment type="similarity">
    <text evidence="1">Belongs to the LipB family.</text>
</comment>
<gene>
    <name evidence="1" type="primary">lipB</name>
    <name type="ordered locus">BMEII0678</name>
</gene>
<feature type="chain" id="PRO_0000062818" description="Octanoyltransferase">
    <location>
        <begin position="1"/>
        <end position="264"/>
    </location>
</feature>
<feature type="domain" description="BPL/LPL catalytic" evidence="2">
    <location>
        <begin position="74"/>
        <end position="262"/>
    </location>
</feature>
<feature type="active site" description="Acyl-thioester intermediate" evidence="1">
    <location>
        <position position="224"/>
    </location>
</feature>
<feature type="binding site" evidence="1">
    <location>
        <begin position="113"/>
        <end position="120"/>
    </location>
    <ligand>
        <name>substrate</name>
    </ligand>
</feature>
<feature type="binding site" evidence="1">
    <location>
        <begin position="193"/>
        <end position="195"/>
    </location>
    <ligand>
        <name>substrate</name>
    </ligand>
</feature>
<feature type="binding site" evidence="1">
    <location>
        <begin position="206"/>
        <end position="208"/>
    </location>
    <ligand>
        <name>substrate</name>
    </ligand>
</feature>
<feature type="site" description="Lowers pKa of active site Cys" evidence="1">
    <location>
        <position position="190"/>
    </location>
</feature>
<organism>
    <name type="scientific">Brucella melitensis biotype 1 (strain ATCC 23456 / CCUG 17765 / NCTC 10094 / 16M)</name>
    <dbReference type="NCBI Taxonomy" id="224914"/>
    <lineage>
        <taxon>Bacteria</taxon>
        <taxon>Pseudomonadati</taxon>
        <taxon>Pseudomonadota</taxon>
        <taxon>Alphaproteobacteria</taxon>
        <taxon>Hyphomicrobiales</taxon>
        <taxon>Brucellaceae</taxon>
        <taxon>Brucella/Ochrobactrum group</taxon>
        <taxon>Brucella</taxon>
    </lineage>
</organism>
<evidence type="ECO:0000255" key="1">
    <source>
        <dbReference type="HAMAP-Rule" id="MF_00013"/>
    </source>
</evidence>
<evidence type="ECO:0000255" key="2">
    <source>
        <dbReference type="PROSITE-ProRule" id="PRU01067"/>
    </source>
</evidence>